<protein>
    <recommendedName>
        <fullName evidence="1">Large ribosomal subunit protein uL6</fullName>
    </recommendedName>
    <alternativeName>
        <fullName evidence="3">50S ribosomal protein L6</fullName>
    </alternativeName>
</protein>
<name>RL6_NITV2</name>
<organism>
    <name type="scientific">Nitratidesulfovibrio vulgaris (strain ATCC 29579 / DSM 644 / CCUG 34227 / NCIMB 8303 / VKM B-1760 / Hildenborough)</name>
    <name type="common">Desulfovibrio vulgaris</name>
    <dbReference type="NCBI Taxonomy" id="882"/>
    <lineage>
        <taxon>Bacteria</taxon>
        <taxon>Pseudomonadati</taxon>
        <taxon>Thermodesulfobacteriota</taxon>
        <taxon>Desulfovibrionia</taxon>
        <taxon>Desulfovibrionales</taxon>
        <taxon>Desulfovibrionaceae</taxon>
        <taxon>Nitratidesulfovibrio</taxon>
    </lineage>
</organism>
<accession>Q72CG5</accession>
<proteinExistence type="inferred from homology"/>
<sequence>MSRIGKQPIPIPSGVEVKIGNDVVEVKGPKGALTTPVCSVLSYEVTDGKVVITRLDETRQTRAQHGLRRTLLANCIEGVSKGFSKTLEVVGVGYKVAVKGDVVDLSVGYSHPVLIDLPAGISAKAEGNKLTISGVDKELVGEVAAQMRRVRKPEPYKGKGIKYDNEQIRRKAGKSGGKK</sequence>
<gene>
    <name evidence="1" type="primary">rplF</name>
    <name type="ordered locus">DVU_1318</name>
</gene>
<dbReference type="EMBL" id="AE017285">
    <property type="protein sequence ID" value="AAS95796.1"/>
    <property type="molecule type" value="Genomic_DNA"/>
</dbReference>
<dbReference type="RefSeq" id="WP_010938613.1">
    <property type="nucleotide sequence ID" value="NC_002937.3"/>
</dbReference>
<dbReference type="RefSeq" id="YP_010537.1">
    <property type="nucleotide sequence ID" value="NC_002937.3"/>
</dbReference>
<dbReference type="SMR" id="Q72CG5"/>
<dbReference type="STRING" id="882.DVU_1318"/>
<dbReference type="PaxDb" id="882-DVU_1318"/>
<dbReference type="EnsemblBacteria" id="AAS95796">
    <property type="protein sequence ID" value="AAS95796"/>
    <property type="gene ID" value="DVU_1318"/>
</dbReference>
<dbReference type="KEGG" id="dvu:DVU_1318"/>
<dbReference type="PATRIC" id="fig|882.5.peg.1230"/>
<dbReference type="eggNOG" id="COG0097">
    <property type="taxonomic scope" value="Bacteria"/>
</dbReference>
<dbReference type="HOGENOM" id="CLU_065464_1_2_7"/>
<dbReference type="OrthoDB" id="9805007at2"/>
<dbReference type="PhylomeDB" id="Q72CG5"/>
<dbReference type="Proteomes" id="UP000002194">
    <property type="component" value="Chromosome"/>
</dbReference>
<dbReference type="GO" id="GO:0022625">
    <property type="term" value="C:cytosolic large ribosomal subunit"/>
    <property type="evidence" value="ECO:0007669"/>
    <property type="project" value="TreeGrafter"/>
</dbReference>
<dbReference type="GO" id="GO:0019843">
    <property type="term" value="F:rRNA binding"/>
    <property type="evidence" value="ECO:0007669"/>
    <property type="project" value="UniProtKB-UniRule"/>
</dbReference>
<dbReference type="GO" id="GO:0003735">
    <property type="term" value="F:structural constituent of ribosome"/>
    <property type="evidence" value="ECO:0007669"/>
    <property type="project" value="InterPro"/>
</dbReference>
<dbReference type="GO" id="GO:0002181">
    <property type="term" value="P:cytoplasmic translation"/>
    <property type="evidence" value="ECO:0007669"/>
    <property type="project" value="TreeGrafter"/>
</dbReference>
<dbReference type="FunFam" id="3.90.930.12:FF:000001">
    <property type="entry name" value="50S ribosomal protein L6"/>
    <property type="match status" value="1"/>
</dbReference>
<dbReference type="FunFam" id="3.90.930.12:FF:000002">
    <property type="entry name" value="50S ribosomal protein L6"/>
    <property type="match status" value="1"/>
</dbReference>
<dbReference type="Gene3D" id="3.90.930.12">
    <property type="entry name" value="Ribosomal protein L6, alpha-beta domain"/>
    <property type="match status" value="2"/>
</dbReference>
<dbReference type="HAMAP" id="MF_01365_B">
    <property type="entry name" value="Ribosomal_uL6_B"/>
    <property type="match status" value="1"/>
</dbReference>
<dbReference type="InterPro" id="IPR000702">
    <property type="entry name" value="Ribosomal_uL6-like"/>
</dbReference>
<dbReference type="InterPro" id="IPR036789">
    <property type="entry name" value="Ribosomal_uL6-like_a/b-dom_sf"/>
</dbReference>
<dbReference type="InterPro" id="IPR020040">
    <property type="entry name" value="Ribosomal_uL6_a/b-dom"/>
</dbReference>
<dbReference type="InterPro" id="IPR019906">
    <property type="entry name" value="Ribosomal_uL6_bac-type"/>
</dbReference>
<dbReference type="InterPro" id="IPR002358">
    <property type="entry name" value="Ribosomal_uL6_CS"/>
</dbReference>
<dbReference type="NCBIfam" id="TIGR03654">
    <property type="entry name" value="L6_bact"/>
    <property type="match status" value="1"/>
</dbReference>
<dbReference type="PANTHER" id="PTHR11655">
    <property type="entry name" value="60S/50S RIBOSOMAL PROTEIN L6/L9"/>
    <property type="match status" value="1"/>
</dbReference>
<dbReference type="PANTHER" id="PTHR11655:SF14">
    <property type="entry name" value="LARGE RIBOSOMAL SUBUNIT PROTEIN UL6M"/>
    <property type="match status" value="1"/>
</dbReference>
<dbReference type="Pfam" id="PF00347">
    <property type="entry name" value="Ribosomal_L6"/>
    <property type="match status" value="2"/>
</dbReference>
<dbReference type="PIRSF" id="PIRSF002162">
    <property type="entry name" value="Ribosomal_L6"/>
    <property type="match status" value="1"/>
</dbReference>
<dbReference type="PRINTS" id="PR00059">
    <property type="entry name" value="RIBOSOMALL6"/>
</dbReference>
<dbReference type="SUPFAM" id="SSF56053">
    <property type="entry name" value="Ribosomal protein L6"/>
    <property type="match status" value="2"/>
</dbReference>
<dbReference type="PROSITE" id="PS00525">
    <property type="entry name" value="RIBOSOMAL_L6_1"/>
    <property type="match status" value="1"/>
</dbReference>
<reference key="1">
    <citation type="journal article" date="2004" name="Nat. Biotechnol.">
        <title>The genome sequence of the anaerobic, sulfate-reducing bacterium Desulfovibrio vulgaris Hildenborough.</title>
        <authorList>
            <person name="Heidelberg J.F."/>
            <person name="Seshadri R."/>
            <person name="Haveman S.A."/>
            <person name="Hemme C.L."/>
            <person name="Paulsen I.T."/>
            <person name="Kolonay J.F."/>
            <person name="Eisen J.A."/>
            <person name="Ward N.L."/>
            <person name="Methe B.A."/>
            <person name="Brinkac L.M."/>
            <person name="Daugherty S.C."/>
            <person name="DeBoy R.T."/>
            <person name="Dodson R.J."/>
            <person name="Durkin A.S."/>
            <person name="Madupu R."/>
            <person name="Nelson W.C."/>
            <person name="Sullivan S.A."/>
            <person name="Fouts D.E."/>
            <person name="Haft D.H."/>
            <person name="Selengut J."/>
            <person name="Peterson J.D."/>
            <person name="Davidsen T.M."/>
            <person name="Zafar N."/>
            <person name="Zhou L."/>
            <person name="Radune D."/>
            <person name="Dimitrov G."/>
            <person name="Hance M."/>
            <person name="Tran K."/>
            <person name="Khouri H.M."/>
            <person name="Gill J."/>
            <person name="Utterback T.R."/>
            <person name="Feldblyum T.V."/>
            <person name="Wall J.D."/>
            <person name="Voordouw G."/>
            <person name="Fraser C.M."/>
        </authorList>
    </citation>
    <scope>NUCLEOTIDE SEQUENCE [LARGE SCALE GENOMIC DNA]</scope>
    <source>
        <strain>ATCC 29579 / DSM 644 / CCUG 34227 / NCIMB 8303 / VKM B-1760 / Hildenborough</strain>
    </source>
</reference>
<feature type="chain" id="PRO_0000265249" description="Large ribosomal subunit protein uL6">
    <location>
        <begin position="1"/>
        <end position="179"/>
    </location>
</feature>
<feature type="region of interest" description="Disordered" evidence="2">
    <location>
        <begin position="151"/>
        <end position="179"/>
    </location>
</feature>
<feature type="compositionally biased region" description="Basic and acidic residues" evidence="2">
    <location>
        <begin position="152"/>
        <end position="169"/>
    </location>
</feature>
<feature type="compositionally biased region" description="Basic residues" evidence="2">
    <location>
        <begin position="170"/>
        <end position="179"/>
    </location>
</feature>
<keyword id="KW-1185">Reference proteome</keyword>
<keyword id="KW-0687">Ribonucleoprotein</keyword>
<keyword id="KW-0689">Ribosomal protein</keyword>
<keyword id="KW-0694">RNA-binding</keyword>
<keyword id="KW-0699">rRNA-binding</keyword>
<evidence type="ECO:0000255" key="1">
    <source>
        <dbReference type="HAMAP-Rule" id="MF_01365"/>
    </source>
</evidence>
<evidence type="ECO:0000256" key="2">
    <source>
        <dbReference type="SAM" id="MobiDB-lite"/>
    </source>
</evidence>
<evidence type="ECO:0000305" key="3"/>
<comment type="function">
    <text evidence="1">This protein binds to the 23S rRNA, and is important in its secondary structure. It is located near the subunit interface in the base of the L7/L12 stalk, and near the tRNA binding site of the peptidyltransferase center.</text>
</comment>
<comment type="subunit">
    <text evidence="1">Part of the 50S ribosomal subunit.</text>
</comment>
<comment type="similarity">
    <text evidence="1">Belongs to the universal ribosomal protein uL6 family.</text>
</comment>